<name>RPOC_TREPA</name>
<sequence>MKDIRDFDSLQIKLASPDTIRAWSYGEVKKPETINYRTLRPEREGLFCERIFGTTKEWECFCGKFKSIRYRGVICDRCGVEVTHFKVRRERMGHIELATPVSHIWYYRCVPSRMGLLLDLQVIALRSVLYYEKYIVIEPGDTDLKKNQLLTETEYNDAQERYGGGFTAGMGAEAIRTLLQNLDLDALVAQLREKMMEKGAKSDKRLLRRIEIVENFRVSGNKPEWMILSVIPVIPPDLRPMVQLDGGRFATSDLNDLYRRVIHRNSRLIRLMELKAPDIIIRNEKRMLQEAVDALFDNSKRKPAIKGASNRPLKSISDMLKGKQGRFRQNLLGKRVDYSGRSVIVVGPELKLWQCGLPTKMALELFKPFIMKKLVEKEIVSNIKKAKMLVEQESPKVFSVLDEVVKEHPVMLNRAPTLHRLGIQAFEPVLVEGKAIRLHPLVCKPFNADFDGDQMAVHVPLTQAAQMECWTLMLSNRNLLDPANGRTIVYPSQDMVLGLYYLTKERSLPEGARPRRFSSVEEVMMAAEKGVIGWQDQIQVRYHKCDGQLVVTTAGRLVLNEEVPAEIPFVNETLDDKRIRKLIERVFKRQDSWLAVQMLDALKTIGYTYATFFGATLSMDDIIVPEQKVQMLEKANKEVLAIASQYRGGHITQEERYNRVVEVWSKTSEELTSLMMETLERDKDGFNTIYMMATSGARGSRNQIRQLAGMRGLMAKPSGDIIELPIRSNFKEGLNVIEFFISTNGARKGLADTALKTADAGYLTRRLVDIAQDVVVNEEDCGTINGIEYRAVKSGDEIIESLAERIVGKYTLERVEHPITHELLLDVNEYIDDERAEKVEEAGVESVKLRTVLTCESKRGVCVCCYGRNLARNKIVEIGEAVGIVAAQSIGQPGTQLTMRTFHVGGTASSTTEENRITFKYPILVKSIEGVHVKMEDGSQLFTRRGTLFFHKTLAEYQLQEGDSVQVRDRARVLKDEVLYHTTDGQTVYASVSGFARIIDRTVYLVGPEQKTEIRNGSNVVIKADEYVPPGKTVATFDPFTEPILAEQDGFVRYEDIILGSTLIEEVNTETGMVERRITTLKTGIQLQPRVFISDESGNALGSYYLPEEARLMVEEGAQVKAGTVIVKLAKAIQKTSDITGGLPRVSELFEARRPKNAAVLAQISGVVSFKGLFKGKRIVVVRDHYGKEYKHLVSMSRQLLVRDGDTVEAGERLCDGCFDPHDILAILGENALQNYLMNEIRDVYRVQGVSINDQHIGLVVRQMLRKTEVVSVGDTRFIYGQQVDKYRFHEENRRVEAEGGQPAVARPMFQGITKAALNIDSFISAASFQETNKVLTNAAIAGSVDDLCGLKENVIIGHLIPAGTGMRRYRQVKLFDKNKRDLDVQMEEVIRRRKLEEEALAQAVAGMEGEPEGEA</sequence>
<reference key="1">
    <citation type="journal article" date="1998" name="Science">
        <title>Complete genome sequence of Treponema pallidum, the syphilis spirochete.</title>
        <authorList>
            <person name="Fraser C.M."/>
            <person name="Norris S.J."/>
            <person name="Weinstock G.M."/>
            <person name="White O."/>
            <person name="Sutton G.G."/>
            <person name="Dodson R.J."/>
            <person name="Gwinn M.L."/>
            <person name="Hickey E.K."/>
            <person name="Clayton R.A."/>
            <person name="Ketchum K.A."/>
            <person name="Sodergren E."/>
            <person name="Hardham J.M."/>
            <person name="McLeod M.P."/>
            <person name="Salzberg S.L."/>
            <person name="Peterson J.D."/>
            <person name="Khalak H.G."/>
            <person name="Richardson D.L."/>
            <person name="Howell J.K."/>
            <person name="Chidambaram M."/>
            <person name="Utterback T.R."/>
            <person name="McDonald L.A."/>
            <person name="Artiach P."/>
            <person name="Bowman C."/>
            <person name="Cotton M.D."/>
            <person name="Fujii C."/>
            <person name="Garland S.A."/>
            <person name="Hatch B."/>
            <person name="Horst K."/>
            <person name="Roberts K.M."/>
            <person name="Sandusky M."/>
            <person name="Weidman J.F."/>
            <person name="Smith H.O."/>
            <person name="Venter J.C."/>
        </authorList>
    </citation>
    <scope>NUCLEOTIDE SEQUENCE [LARGE SCALE GENOMIC DNA]</scope>
    <source>
        <strain>Nichols</strain>
    </source>
</reference>
<protein>
    <recommendedName>
        <fullName evidence="1">DNA-directed RNA polymerase subunit beta'</fullName>
        <shortName evidence="1">RNAP subunit beta'</shortName>
        <ecNumber evidence="1">2.7.7.6</ecNumber>
    </recommendedName>
    <alternativeName>
        <fullName evidence="1">RNA polymerase subunit beta'</fullName>
    </alternativeName>
    <alternativeName>
        <fullName evidence="1">Transcriptase subunit beta'</fullName>
    </alternativeName>
</protein>
<accession>O83270</accession>
<keyword id="KW-0240">DNA-directed RNA polymerase</keyword>
<keyword id="KW-0460">Magnesium</keyword>
<keyword id="KW-0479">Metal-binding</keyword>
<keyword id="KW-0548">Nucleotidyltransferase</keyword>
<keyword id="KW-1185">Reference proteome</keyword>
<keyword id="KW-0804">Transcription</keyword>
<keyword id="KW-0808">Transferase</keyword>
<keyword id="KW-0862">Zinc</keyword>
<feature type="chain" id="PRO_0000067823" description="DNA-directed RNA polymerase subunit beta'">
    <location>
        <begin position="1"/>
        <end position="1416"/>
    </location>
</feature>
<feature type="binding site" evidence="1">
    <location>
        <position position="60"/>
    </location>
    <ligand>
        <name>Zn(2+)</name>
        <dbReference type="ChEBI" id="CHEBI:29105"/>
        <label>1</label>
    </ligand>
</feature>
<feature type="binding site" evidence="1">
    <location>
        <position position="62"/>
    </location>
    <ligand>
        <name>Zn(2+)</name>
        <dbReference type="ChEBI" id="CHEBI:29105"/>
        <label>1</label>
    </ligand>
</feature>
<feature type="binding site" evidence="1">
    <location>
        <position position="75"/>
    </location>
    <ligand>
        <name>Zn(2+)</name>
        <dbReference type="ChEBI" id="CHEBI:29105"/>
        <label>1</label>
    </ligand>
</feature>
<feature type="binding site" evidence="1">
    <location>
        <position position="78"/>
    </location>
    <ligand>
        <name>Zn(2+)</name>
        <dbReference type="ChEBI" id="CHEBI:29105"/>
        <label>1</label>
    </ligand>
</feature>
<feature type="binding site" evidence="1">
    <location>
        <position position="449"/>
    </location>
    <ligand>
        <name>Mg(2+)</name>
        <dbReference type="ChEBI" id="CHEBI:18420"/>
    </ligand>
</feature>
<feature type="binding site" evidence="1">
    <location>
        <position position="451"/>
    </location>
    <ligand>
        <name>Mg(2+)</name>
        <dbReference type="ChEBI" id="CHEBI:18420"/>
    </ligand>
</feature>
<feature type="binding site" evidence="1">
    <location>
        <position position="453"/>
    </location>
    <ligand>
        <name>Mg(2+)</name>
        <dbReference type="ChEBI" id="CHEBI:18420"/>
    </ligand>
</feature>
<feature type="binding site" evidence="1">
    <location>
        <position position="781"/>
    </location>
    <ligand>
        <name>Zn(2+)</name>
        <dbReference type="ChEBI" id="CHEBI:29105"/>
        <label>2</label>
    </ligand>
</feature>
<feature type="binding site" evidence="1">
    <location>
        <position position="855"/>
    </location>
    <ligand>
        <name>Zn(2+)</name>
        <dbReference type="ChEBI" id="CHEBI:29105"/>
        <label>2</label>
    </ligand>
</feature>
<feature type="binding site" evidence="1">
    <location>
        <position position="862"/>
    </location>
    <ligand>
        <name>Zn(2+)</name>
        <dbReference type="ChEBI" id="CHEBI:29105"/>
        <label>2</label>
    </ligand>
</feature>
<feature type="binding site" evidence="1">
    <location>
        <position position="865"/>
    </location>
    <ligand>
        <name>Zn(2+)</name>
        <dbReference type="ChEBI" id="CHEBI:29105"/>
        <label>2</label>
    </ligand>
</feature>
<evidence type="ECO:0000255" key="1">
    <source>
        <dbReference type="HAMAP-Rule" id="MF_01322"/>
    </source>
</evidence>
<gene>
    <name evidence="1" type="primary">rpoC</name>
    <name type="ordered locus">TP_0242</name>
</gene>
<comment type="function">
    <text evidence="1">DNA-dependent RNA polymerase catalyzes the transcription of DNA into RNA using the four ribonucleoside triphosphates as substrates.</text>
</comment>
<comment type="catalytic activity">
    <reaction evidence="1">
        <text>RNA(n) + a ribonucleoside 5'-triphosphate = RNA(n+1) + diphosphate</text>
        <dbReference type="Rhea" id="RHEA:21248"/>
        <dbReference type="Rhea" id="RHEA-COMP:14527"/>
        <dbReference type="Rhea" id="RHEA-COMP:17342"/>
        <dbReference type="ChEBI" id="CHEBI:33019"/>
        <dbReference type="ChEBI" id="CHEBI:61557"/>
        <dbReference type="ChEBI" id="CHEBI:140395"/>
        <dbReference type="EC" id="2.7.7.6"/>
    </reaction>
</comment>
<comment type="cofactor">
    <cofactor evidence="1">
        <name>Mg(2+)</name>
        <dbReference type="ChEBI" id="CHEBI:18420"/>
    </cofactor>
    <text evidence="1">Binds 1 Mg(2+) ion per subunit.</text>
</comment>
<comment type="cofactor">
    <cofactor evidence="1">
        <name>Zn(2+)</name>
        <dbReference type="ChEBI" id="CHEBI:29105"/>
    </cofactor>
    <text evidence="1">Binds 2 Zn(2+) ions per subunit.</text>
</comment>
<comment type="subunit">
    <text evidence="1">The RNAP catalytic core consists of 2 alpha, 1 beta, 1 beta' and 1 omega subunit. When a sigma factor is associated with the core the holoenzyme is formed, which can initiate transcription.</text>
</comment>
<comment type="similarity">
    <text evidence="1">Belongs to the RNA polymerase beta' chain family.</text>
</comment>
<dbReference type="EC" id="2.7.7.6" evidence="1"/>
<dbReference type="EMBL" id="AE000520">
    <property type="protein sequence ID" value="AAC65230.1"/>
    <property type="molecule type" value="Genomic_DNA"/>
</dbReference>
<dbReference type="PIR" id="D71350">
    <property type="entry name" value="D71350"/>
</dbReference>
<dbReference type="RefSeq" id="WP_010881690.1">
    <property type="nucleotide sequence ID" value="NC_021490.2"/>
</dbReference>
<dbReference type="SMR" id="O83270"/>
<dbReference type="STRING" id="243276.TP_0242"/>
<dbReference type="EnsemblBacteria" id="AAC65230">
    <property type="protein sequence ID" value="AAC65230"/>
    <property type="gene ID" value="TP_0242"/>
</dbReference>
<dbReference type="GeneID" id="93876034"/>
<dbReference type="KEGG" id="tpa:TP_0242"/>
<dbReference type="KEGG" id="tpw:TPANIC_0242"/>
<dbReference type="eggNOG" id="COG0086">
    <property type="taxonomic scope" value="Bacteria"/>
</dbReference>
<dbReference type="eggNOG" id="COG0739">
    <property type="taxonomic scope" value="Bacteria"/>
</dbReference>
<dbReference type="HOGENOM" id="CLU_000524_3_1_12"/>
<dbReference type="OrthoDB" id="9815296at2"/>
<dbReference type="Proteomes" id="UP000000811">
    <property type="component" value="Chromosome"/>
</dbReference>
<dbReference type="GO" id="GO:0000428">
    <property type="term" value="C:DNA-directed RNA polymerase complex"/>
    <property type="evidence" value="ECO:0007669"/>
    <property type="project" value="UniProtKB-KW"/>
</dbReference>
<dbReference type="GO" id="GO:0003677">
    <property type="term" value="F:DNA binding"/>
    <property type="evidence" value="ECO:0007669"/>
    <property type="project" value="UniProtKB-UniRule"/>
</dbReference>
<dbReference type="GO" id="GO:0003899">
    <property type="term" value="F:DNA-directed RNA polymerase activity"/>
    <property type="evidence" value="ECO:0007669"/>
    <property type="project" value="UniProtKB-UniRule"/>
</dbReference>
<dbReference type="GO" id="GO:0000287">
    <property type="term" value="F:magnesium ion binding"/>
    <property type="evidence" value="ECO:0007669"/>
    <property type="project" value="UniProtKB-UniRule"/>
</dbReference>
<dbReference type="GO" id="GO:0008270">
    <property type="term" value="F:zinc ion binding"/>
    <property type="evidence" value="ECO:0007669"/>
    <property type="project" value="UniProtKB-UniRule"/>
</dbReference>
<dbReference type="GO" id="GO:0006351">
    <property type="term" value="P:DNA-templated transcription"/>
    <property type="evidence" value="ECO:0007669"/>
    <property type="project" value="UniProtKB-UniRule"/>
</dbReference>
<dbReference type="CDD" id="cd02655">
    <property type="entry name" value="RNAP_beta'_C"/>
    <property type="match status" value="1"/>
</dbReference>
<dbReference type="CDD" id="cd01609">
    <property type="entry name" value="RNAP_beta'_N"/>
    <property type="match status" value="1"/>
</dbReference>
<dbReference type="Gene3D" id="1.10.132.30">
    <property type="match status" value="1"/>
</dbReference>
<dbReference type="Gene3D" id="1.10.150.390">
    <property type="match status" value="1"/>
</dbReference>
<dbReference type="Gene3D" id="1.10.1790.20">
    <property type="match status" value="1"/>
</dbReference>
<dbReference type="Gene3D" id="1.10.40.90">
    <property type="match status" value="1"/>
</dbReference>
<dbReference type="Gene3D" id="2.40.40.20">
    <property type="match status" value="1"/>
</dbReference>
<dbReference type="Gene3D" id="2.40.50.100">
    <property type="match status" value="2"/>
</dbReference>
<dbReference type="Gene3D" id="4.10.860.120">
    <property type="entry name" value="RNA polymerase II, clamp domain"/>
    <property type="match status" value="1"/>
</dbReference>
<dbReference type="Gene3D" id="1.10.274.100">
    <property type="entry name" value="RNA polymerase Rpb1, domain 3"/>
    <property type="match status" value="2"/>
</dbReference>
<dbReference type="HAMAP" id="MF_01322">
    <property type="entry name" value="RNApol_bact_RpoC"/>
    <property type="match status" value="1"/>
</dbReference>
<dbReference type="InterPro" id="IPR045867">
    <property type="entry name" value="DNA-dir_RpoC_beta_prime"/>
</dbReference>
<dbReference type="InterPro" id="IPR012754">
    <property type="entry name" value="DNA-dir_RpoC_beta_prime_bact"/>
</dbReference>
<dbReference type="InterPro" id="IPR000722">
    <property type="entry name" value="RNA_pol_asu"/>
</dbReference>
<dbReference type="InterPro" id="IPR006592">
    <property type="entry name" value="RNA_pol_N"/>
</dbReference>
<dbReference type="InterPro" id="IPR007080">
    <property type="entry name" value="RNA_pol_Rpb1_1"/>
</dbReference>
<dbReference type="InterPro" id="IPR007066">
    <property type="entry name" value="RNA_pol_Rpb1_3"/>
</dbReference>
<dbReference type="InterPro" id="IPR042102">
    <property type="entry name" value="RNA_pol_Rpb1_3_sf"/>
</dbReference>
<dbReference type="InterPro" id="IPR007083">
    <property type="entry name" value="RNA_pol_Rpb1_4"/>
</dbReference>
<dbReference type="InterPro" id="IPR007081">
    <property type="entry name" value="RNA_pol_Rpb1_5"/>
</dbReference>
<dbReference type="InterPro" id="IPR044893">
    <property type="entry name" value="RNA_pol_Rpb1_clamp_domain"/>
</dbReference>
<dbReference type="InterPro" id="IPR038120">
    <property type="entry name" value="Rpb1_funnel_sf"/>
</dbReference>
<dbReference type="NCBIfam" id="TIGR02386">
    <property type="entry name" value="rpoC_TIGR"/>
    <property type="match status" value="1"/>
</dbReference>
<dbReference type="PANTHER" id="PTHR19376">
    <property type="entry name" value="DNA-DIRECTED RNA POLYMERASE"/>
    <property type="match status" value="1"/>
</dbReference>
<dbReference type="PANTHER" id="PTHR19376:SF54">
    <property type="entry name" value="DNA-DIRECTED RNA POLYMERASE SUBUNIT BETA"/>
    <property type="match status" value="1"/>
</dbReference>
<dbReference type="Pfam" id="PF04997">
    <property type="entry name" value="RNA_pol_Rpb1_1"/>
    <property type="match status" value="1"/>
</dbReference>
<dbReference type="Pfam" id="PF00623">
    <property type="entry name" value="RNA_pol_Rpb1_2"/>
    <property type="match status" value="1"/>
</dbReference>
<dbReference type="Pfam" id="PF04983">
    <property type="entry name" value="RNA_pol_Rpb1_3"/>
    <property type="match status" value="1"/>
</dbReference>
<dbReference type="Pfam" id="PF05000">
    <property type="entry name" value="RNA_pol_Rpb1_4"/>
    <property type="match status" value="1"/>
</dbReference>
<dbReference type="Pfam" id="PF04998">
    <property type="entry name" value="RNA_pol_Rpb1_5"/>
    <property type="match status" value="1"/>
</dbReference>
<dbReference type="SMART" id="SM00663">
    <property type="entry name" value="RPOLA_N"/>
    <property type="match status" value="1"/>
</dbReference>
<dbReference type="SUPFAM" id="SSF64484">
    <property type="entry name" value="beta and beta-prime subunits of DNA dependent RNA-polymerase"/>
    <property type="match status" value="1"/>
</dbReference>
<proteinExistence type="inferred from homology"/>
<organism>
    <name type="scientific">Treponema pallidum (strain Nichols)</name>
    <dbReference type="NCBI Taxonomy" id="243276"/>
    <lineage>
        <taxon>Bacteria</taxon>
        <taxon>Pseudomonadati</taxon>
        <taxon>Spirochaetota</taxon>
        <taxon>Spirochaetia</taxon>
        <taxon>Spirochaetales</taxon>
        <taxon>Treponemataceae</taxon>
        <taxon>Treponema</taxon>
    </lineage>
</organism>